<name>NFX1_CAEEL</name>
<comment type="function">
    <text evidence="1">May play a role in transcription regulation.</text>
</comment>
<comment type="subcellular location">
    <subcellularLocation>
        <location evidence="1">Nucleus</location>
    </subcellularLocation>
</comment>
<comment type="similarity">
    <text evidence="5">Belongs to the NFX1 family.</text>
</comment>
<proteinExistence type="inferred from homology"/>
<dbReference type="EMBL" id="FO080367">
    <property type="protein sequence ID" value="CCD63227.1"/>
    <property type="molecule type" value="Genomic_DNA"/>
</dbReference>
<dbReference type="PIR" id="A88481">
    <property type="entry name" value="A88481"/>
</dbReference>
<dbReference type="RefSeq" id="NP_498394.1">
    <property type="nucleotide sequence ID" value="NM_065993.8"/>
</dbReference>
<dbReference type="BioGRID" id="41120">
    <property type="interactions" value="4"/>
</dbReference>
<dbReference type="DIP" id="DIP-26775N"/>
<dbReference type="FunCoup" id="Q18034">
    <property type="interactions" value="3682"/>
</dbReference>
<dbReference type="STRING" id="6239.C16A3.7.1"/>
<dbReference type="PaxDb" id="6239-C16A3.7"/>
<dbReference type="PeptideAtlas" id="Q18034"/>
<dbReference type="EnsemblMetazoa" id="C16A3.7.1">
    <property type="protein sequence ID" value="C16A3.7.1"/>
    <property type="gene ID" value="WBGene00007048"/>
</dbReference>
<dbReference type="GeneID" id="175902"/>
<dbReference type="KEGG" id="cel:CELE_C16A3.7"/>
<dbReference type="UCSC" id="C16A3.7">
    <property type="organism name" value="c. elegans"/>
</dbReference>
<dbReference type="AGR" id="WB:WBGene00007048"/>
<dbReference type="CTD" id="175902"/>
<dbReference type="WormBase" id="C16A3.7">
    <property type="protein sequence ID" value="CE04007"/>
    <property type="gene ID" value="WBGene00007048"/>
    <property type="gene designation" value="nfx-1"/>
</dbReference>
<dbReference type="eggNOG" id="KOG1952">
    <property type="taxonomic scope" value="Eukaryota"/>
</dbReference>
<dbReference type="GeneTree" id="ENSGT00940000156325"/>
<dbReference type="HOGENOM" id="CLU_005714_0_0_1"/>
<dbReference type="InParanoid" id="Q18034"/>
<dbReference type="OMA" id="CPHPCDS"/>
<dbReference type="OrthoDB" id="6512771at2759"/>
<dbReference type="PhylomeDB" id="Q18034"/>
<dbReference type="PRO" id="PR:Q18034"/>
<dbReference type="Proteomes" id="UP000001940">
    <property type="component" value="Chromosome III"/>
</dbReference>
<dbReference type="Bgee" id="WBGene00007048">
    <property type="expression patterns" value="Expressed in germ line (C elegans) and 4 other cell types or tissues"/>
</dbReference>
<dbReference type="GO" id="GO:0005634">
    <property type="term" value="C:nucleus"/>
    <property type="evidence" value="ECO:0000318"/>
    <property type="project" value="GO_Central"/>
</dbReference>
<dbReference type="GO" id="GO:0000981">
    <property type="term" value="F:DNA-binding transcription factor activity, RNA polymerase II-specific"/>
    <property type="evidence" value="ECO:0000318"/>
    <property type="project" value="GO_Central"/>
</dbReference>
<dbReference type="GO" id="GO:0000977">
    <property type="term" value="F:RNA polymerase II transcription regulatory region sequence-specific DNA binding"/>
    <property type="evidence" value="ECO:0000318"/>
    <property type="project" value="GO_Central"/>
</dbReference>
<dbReference type="GO" id="GO:0008270">
    <property type="term" value="F:zinc ion binding"/>
    <property type="evidence" value="ECO:0007669"/>
    <property type="project" value="UniProtKB-KW"/>
</dbReference>
<dbReference type="GO" id="GO:0000122">
    <property type="term" value="P:negative regulation of transcription by RNA polymerase II"/>
    <property type="evidence" value="ECO:0000318"/>
    <property type="project" value="GO_Central"/>
</dbReference>
<dbReference type="CDD" id="cd06008">
    <property type="entry name" value="NF-X1-zinc-finger"/>
    <property type="match status" value="6"/>
</dbReference>
<dbReference type="InterPro" id="IPR034078">
    <property type="entry name" value="NFX1_fam"/>
</dbReference>
<dbReference type="InterPro" id="IPR001374">
    <property type="entry name" value="R3H_dom"/>
</dbReference>
<dbReference type="InterPro" id="IPR036867">
    <property type="entry name" value="R3H_dom_sf"/>
</dbReference>
<dbReference type="InterPro" id="IPR000967">
    <property type="entry name" value="Znf_NFX1"/>
</dbReference>
<dbReference type="InterPro" id="IPR001841">
    <property type="entry name" value="Znf_RING"/>
</dbReference>
<dbReference type="PANTHER" id="PTHR12360">
    <property type="entry name" value="NUCLEAR TRANSCRIPTION FACTOR, X-BOX BINDING 1 NFX1"/>
    <property type="match status" value="1"/>
</dbReference>
<dbReference type="PANTHER" id="PTHR12360:SF12">
    <property type="entry name" value="TRANSCRIPTIONAL REPRESSOR NF-X1"/>
    <property type="match status" value="1"/>
</dbReference>
<dbReference type="Pfam" id="PF01424">
    <property type="entry name" value="R3H"/>
    <property type="match status" value="1"/>
</dbReference>
<dbReference type="Pfam" id="PF01422">
    <property type="entry name" value="zf-NF-X1"/>
    <property type="match status" value="7"/>
</dbReference>
<dbReference type="SMART" id="SM00393">
    <property type="entry name" value="R3H"/>
    <property type="match status" value="1"/>
</dbReference>
<dbReference type="SMART" id="SM00438">
    <property type="entry name" value="ZnF_NFX"/>
    <property type="match status" value="10"/>
</dbReference>
<dbReference type="SUPFAM" id="SSF82708">
    <property type="entry name" value="R3H domain"/>
    <property type="match status" value="1"/>
</dbReference>
<dbReference type="SUPFAM" id="SSF57850">
    <property type="entry name" value="RING/U-box"/>
    <property type="match status" value="1"/>
</dbReference>
<dbReference type="PROSITE" id="PS51061">
    <property type="entry name" value="R3H"/>
    <property type="match status" value="1"/>
</dbReference>
<dbReference type="PROSITE" id="PS50089">
    <property type="entry name" value="ZF_RING_2"/>
    <property type="match status" value="1"/>
</dbReference>
<organism>
    <name type="scientific">Caenorhabditis elegans</name>
    <dbReference type="NCBI Taxonomy" id="6239"/>
    <lineage>
        <taxon>Eukaryota</taxon>
        <taxon>Metazoa</taxon>
        <taxon>Ecdysozoa</taxon>
        <taxon>Nematoda</taxon>
        <taxon>Chromadorea</taxon>
        <taxon>Rhabditida</taxon>
        <taxon>Rhabditina</taxon>
        <taxon>Rhabditomorpha</taxon>
        <taxon>Rhabditoidea</taxon>
        <taxon>Rhabditidae</taxon>
        <taxon>Peloderinae</taxon>
        <taxon>Caenorhabditis</taxon>
    </lineage>
</organism>
<sequence length="1119" mass="125148">MADTEGTSSSIPTSTNSSRHRASRGRGGRFRQAPRQVGANTADNLDAAPLMNPRGGHRGGSGNKRGRGQKEATSASRLQMQPEANFTFNPNAATFNPAQSVLFDPSVPPPTIGASTHSNQNSRQQEPSQNRRRRGGQQNTQRRQLEIQEQRGDSHPQNQSRQNNRNQLNVDRIANQQNKSVQNPSRNPGNSRRGQGARRREQKEEPLTEEETKILADKPLREGLVYLLENNKYECAICYTRITTRQGVWSCKTCYHIFHISTGCITDWARSSRDKEGANTWRCPTCQTENETMPYNYYCFCGRMRNPNFRVGEVPHSCGETCGGARKFGCPHPCTELCHPGPCIECKLFTTKSCNCGKTKKSVRCGSDQEVMCETVCGKQLSCGQHNCERICHSGDCGECTVILEQDCFCGKTPKEVSCNPCAHEKYSCGSECDGMFSCGIHHCTKKCHDKECGECETGANRIRTCPCGRNTLQSLGVTRKKCTDMVPTCDSVCDKWLTCGTPGKNHHCREKCHEGPCPPCNLNTSVICRCGTSKGVIPCDEYLQIMKTTGEYLCTKRCRKKKSCGMHKCQEVCCIQDEHFCLQMCNKRLSCGIHTCENVCHAGQCRPCLQASFDEQFCHCGHTVRMPPIPCGARLPVCSQPCVRPHSCDHSVSHKCHGEQNCPPCTQLTEKMCYGGHRVRKNIPCHIDSVSCGVVCKKPLKCGVHVCQRTCHGEECEKEGEKCTKKCETIRELCEHPCALPCHEDSPCEPSPCKASVRISCECGRIKKDAPCCEVDKMILSKLEKEEEEKSESDGEEKVVKEGILKRSTSFSQLNCMKCDDECKKLERNRKVAEALEVDTDEYGMNKLAPTISFPCYLKEMVRTNIDFVKSVEKILIDLVIQILSGEAYHDTFRAHLPAMSIEKRRFVHEYANFFNIASESVDSPPKRSIVLTAVRGKSHQPLVLISDLVNYKGALKTPGPAVIRKDIMDQALSKKEETEGLMKPLRCTEKMVVRREARPMKEITAPIPLKQQNQFALLGSDVDSDDEESNVPTTSNLVSSPPKDWWKDEEEGWQKVQQKEYVVEVERDMTEDEIEAAKKLDEGPTWEDQCDEDAPATETSSAIESPAKEEPVAELLE</sequence>
<feature type="chain" id="PRO_0000334615" description="Transcriptional repressor NF-X1 homolog">
    <location>
        <begin position="1"/>
        <end position="1119"/>
    </location>
</feature>
<feature type="domain" description="R3H" evidence="3">
    <location>
        <begin position="867"/>
        <end position="937"/>
    </location>
</feature>
<feature type="zinc finger region" description="RING-type; degenerate" evidence="2">
    <location>
        <begin position="235"/>
        <end position="287"/>
    </location>
</feature>
<feature type="zinc finger region" description="NF-X1-type 1">
    <location>
        <begin position="330"/>
        <end position="348"/>
    </location>
</feature>
<feature type="zinc finger region" description="NF-X1-type 2">
    <location>
        <begin position="383"/>
        <end position="402"/>
    </location>
</feature>
<feature type="zinc finger region" description="NF-X1-type 3">
    <location>
        <begin position="439"/>
        <end position="458"/>
    </location>
</feature>
<feature type="zinc finger region" description="NF-X1-type 4">
    <location>
        <begin position="500"/>
        <end position="523"/>
    </location>
</feature>
<feature type="zinc finger region" description="NF-X1-type 5">
    <location>
        <begin position="565"/>
        <end position="584"/>
    </location>
</feature>
<feature type="zinc finger region" description="NF-X1-type 6">
    <location>
        <begin position="592"/>
        <end position="611"/>
    </location>
</feature>
<feature type="zinc finger region" description="NF-X1-type 7">
    <location>
        <begin position="649"/>
        <end position="668"/>
    </location>
</feature>
<feature type="zinc finger region" description="NF-X1-type 8">
    <location>
        <begin position="703"/>
        <end position="726"/>
    </location>
</feature>
<feature type="zinc finger region" description="NF-X1-type 9">
    <location>
        <begin position="735"/>
        <end position="756"/>
    </location>
</feature>
<feature type="region of interest" description="Disordered" evidence="4">
    <location>
        <begin position="1"/>
        <end position="214"/>
    </location>
</feature>
<feature type="region of interest" description="Disordered" evidence="4">
    <location>
        <begin position="1024"/>
        <end position="1047"/>
    </location>
</feature>
<feature type="region of interest" description="Disordered" evidence="4">
    <location>
        <begin position="1078"/>
        <end position="1119"/>
    </location>
</feature>
<feature type="compositionally biased region" description="Low complexity" evidence="4">
    <location>
        <begin position="7"/>
        <end position="17"/>
    </location>
</feature>
<feature type="compositionally biased region" description="Basic residues" evidence="4">
    <location>
        <begin position="18"/>
        <end position="29"/>
    </location>
</feature>
<feature type="compositionally biased region" description="Low complexity" evidence="4">
    <location>
        <begin position="84"/>
        <end position="98"/>
    </location>
</feature>
<feature type="compositionally biased region" description="Polar residues" evidence="4">
    <location>
        <begin position="113"/>
        <end position="128"/>
    </location>
</feature>
<feature type="compositionally biased region" description="Basic and acidic residues" evidence="4">
    <location>
        <begin position="143"/>
        <end position="154"/>
    </location>
</feature>
<feature type="compositionally biased region" description="Low complexity" evidence="4">
    <location>
        <begin position="157"/>
        <end position="167"/>
    </location>
</feature>
<feature type="compositionally biased region" description="Polar residues" evidence="4">
    <location>
        <begin position="174"/>
        <end position="193"/>
    </location>
</feature>
<feature type="compositionally biased region" description="Basic and acidic residues" evidence="4">
    <location>
        <begin position="198"/>
        <end position="214"/>
    </location>
</feature>
<feature type="compositionally biased region" description="Polar residues" evidence="4">
    <location>
        <begin position="1032"/>
        <end position="1041"/>
    </location>
</feature>
<feature type="compositionally biased region" description="Acidic residues" evidence="4">
    <location>
        <begin position="1086"/>
        <end position="1097"/>
    </location>
</feature>
<protein>
    <recommendedName>
        <fullName>Transcriptional repressor NF-X1 homolog</fullName>
    </recommendedName>
</protein>
<gene>
    <name type="primary">nfx-1</name>
    <name type="synonym">tag-182</name>
    <name type="ORF">C16A3.7</name>
</gene>
<keyword id="KW-0238">DNA-binding</keyword>
<keyword id="KW-0479">Metal-binding</keyword>
<keyword id="KW-0539">Nucleus</keyword>
<keyword id="KW-1185">Reference proteome</keyword>
<keyword id="KW-0677">Repeat</keyword>
<keyword id="KW-0804">Transcription</keyword>
<keyword id="KW-0805">Transcription regulation</keyword>
<keyword id="KW-0862">Zinc</keyword>
<keyword id="KW-0863">Zinc-finger</keyword>
<reference key="1">
    <citation type="journal article" date="1998" name="Science">
        <title>Genome sequence of the nematode C. elegans: a platform for investigating biology.</title>
        <authorList>
            <consortium name="The C. elegans sequencing consortium"/>
        </authorList>
    </citation>
    <scope>NUCLEOTIDE SEQUENCE [LARGE SCALE GENOMIC DNA]</scope>
    <source>
        <strain>Bristol N2</strain>
    </source>
</reference>
<accession>Q18034</accession>
<evidence type="ECO:0000250" key="1"/>
<evidence type="ECO:0000255" key="2">
    <source>
        <dbReference type="PROSITE-ProRule" id="PRU00175"/>
    </source>
</evidence>
<evidence type="ECO:0000255" key="3">
    <source>
        <dbReference type="PROSITE-ProRule" id="PRU00382"/>
    </source>
</evidence>
<evidence type="ECO:0000256" key="4">
    <source>
        <dbReference type="SAM" id="MobiDB-lite"/>
    </source>
</evidence>
<evidence type="ECO:0000305" key="5"/>